<accession>C5DX05</accession>
<proteinExistence type="inferred from homology"/>
<reference key="1">
    <citation type="journal article" date="2009" name="Genome Res.">
        <title>Comparative genomics of protoploid Saccharomycetaceae.</title>
        <authorList>
            <consortium name="The Genolevures Consortium"/>
            <person name="Souciet J.-L."/>
            <person name="Dujon B."/>
            <person name="Gaillardin C."/>
            <person name="Johnston M."/>
            <person name="Baret P.V."/>
            <person name="Cliften P."/>
            <person name="Sherman D.J."/>
            <person name="Weissenbach J."/>
            <person name="Westhof E."/>
            <person name="Wincker P."/>
            <person name="Jubin C."/>
            <person name="Poulain J."/>
            <person name="Barbe V."/>
            <person name="Segurens B."/>
            <person name="Artiguenave F."/>
            <person name="Anthouard V."/>
            <person name="Vacherie B."/>
            <person name="Val M.-E."/>
            <person name="Fulton R.S."/>
            <person name="Minx P."/>
            <person name="Wilson R."/>
            <person name="Durrens P."/>
            <person name="Jean G."/>
            <person name="Marck C."/>
            <person name="Martin T."/>
            <person name="Nikolski M."/>
            <person name="Rolland T."/>
            <person name="Seret M.-L."/>
            <person name="Casaregola S."/>
            <person name="Despons L."/>
            <person name="Fairhead C."/>
            <person name="Fischer G."/>
            <person name="Lafontaine I."/>
            <person name="Leh V."/>
            <person name="Lemaire M."/>
            <person name="de Montigny J."/>
            <person name="Neuveglise C."/>
            <person name="Thierry A."/>
            <person name="Blanc-Lenfle I."/>
            <person name="Bleykasten C."/>
            <person name="Diffels J."/>
            <person name="Fritsch E."/>
            <person name="Frangeul L."/>
            <person name="Goeffon A."/>
            <person name="Jauniaux N."/>
            <person name="Kachouri-Lafond R."/>
            <person name="Payen C."/>
            <person name="Potier S."/>
            <person name="Pribylova L."/>
            <person name="Ozanne C."/>
            <person name="Richard G.-F."/>
            <person name="Sacerdot C."/>
            <person name="Straub M.-L."/>
            <person name="Talla E."/>
        </authorList>
    </citation>
    <scope>NUCLEOTIDE SEQUENCE [LARGE SCALE GENOMIC DNA]</scope>
    <source>
        <strain>ATCC 2623 / CBS 732 / BCRC 21506 / NBRC 1130 / NCYC 568 / NRRL Y-229</strain>
    </source>
</reference>
<gene>
    <name type="primary">EIS1</name>
    <name type="ordered locus">ZYRO0F01188g</name>
</gene>
<comment type="function">
    <text evidence="1">Required for normal formation of eisosomes, large cytoplasmic protein assemblies that localize to specialized domains on plasma membrane and mark the site of endocytosis.</text>
</comment>
<comment type="subcellular location">
    <subcellularLocation>
        <location evidence="1">Cytoplasmic granule</location>
    </subcellularLocation>
    <subcellularLocation>
        <location evidence="1">Cell membrane</location>
        <topology evidence="1">Peripheral membrane protein</topology>
        <orientation evidence="1">Cytoplasmic side</orientation>
    </subcellularLocation>
    <text evidence="1">Localizes at the eisosomes.</text>
</comment>
<comment type="similarity">
    <text evidence="3">Belongs to the EIS1 family.</text>
</comment>
<protein>
    <recommendedName>
        <fullName>Eisosome protein 1</fullName>
    </recommendedName>
</protein>
<evidence type="ECO:0000250" key="1"/>
<evidence type="ECO:0000256" key="2">
    <source>
        <dbReference type="SAM" id="MobiDB-lite"/>
    </source>
</evidence>
<evidence type="ECO:0000305" key="3"/>
<sequence length="848" mass="94830">MSLVSTVNDAERTDLLNSSGNRNGPVVETVTTTAVEEKPITTKSVRGFSVYHKGGGAQLSKEALYRAKVKYGIYQSPARSFSTGVAEPKVASDVAANLANDNKTTIEAYKRLFVDPNANTAARRSIVNGGPRVEDVVIPESHYGSHQAATRAYSVASVATDENARRLQSPQSPPATRAHSLKSANKAFYNTKLPEQVEVVPKQVGKKPMDMSKILSSAENRAQHRVTDRWDPVKADHGIRTSTQNLNRVRSTSLTGPIYKERKGVKEPSSKDASATQGDRGNYAQWAAFAVRDMDPTALTNKEFEERERAKRELLSQITSQQVLAKARENADKQLDAIDANDVHRVLFGNDAYNRAAIEIAQRNAQRQAGETDVNEGKINIGGGLWLSPDDVHTIAREMVDPVLGEVHQRADDQRATDVDIKERNDYVTNEWNAWTAMHQTKENNNEALLVNSQNKRTREADSARSEAEKSFTELCDRMDKQVAERNDLLNQTKQAREQLERETEEKLAQNKEDNKTALRDLKGQHAKELEEAREEQRRLVQPYEERLEEVNREHESLVQERTAINEEIARLHESIKEHQYQISKYEREIKSHEEQNASAEEELKKLETDREGIQSHYNDNVVVNANKAKEQALLSSEEARLQNLKVDAIINERKTELNRTEQELQREKLNMLEAMRKTAEARGDENIDEERVKQLIGMTSTEYVEEQKKLQKAAGKAEKPKASTADKGQALDKALAHDQGDQEANTKDFKEGAETKAKESKGKPSQSVAKAIATSPTKTEAKAEPSTSKGKSNGVGTHPDNASGISQISDTLENGKHLSEEDLKELAEDAEQRVSGEPQPSYFKEVF</sequence>
<keyword id="KW-1003">Cell membrane</keyword>
<keyword id="KW-0472">Membrane</keyword>
<keyword id="KW-1185">Reference proteome</keyword>
<organism>
    <name type="scientific">Zygosaccharomyces rouxii (strain ATCC 2623 / CBS 732 / NBRC 1130 / NCYC 568 / NRRL Y-229)</name>
    <dbReference type="NCBI Taxonomy" id="559307"/>
    <lineage>
        <taxon>Eukaryota</taxon>
        <taxon>Fungi</taxon>
        <taxon>Dikarya</taxon>
        <taxon>Ascomycota</taxon>
        <taxon>Saccharomycotina</taxon>
        <taxon>Saccharomycetes</taxon>
        <taxon>Saccharomycetales</taxon>
        <taxon>Saccharomycetaceae</taxon>
        <taxon>Zygosaccharomyces</taxon>
    </lineage>
</organism>
<dbReference type="EMBL" id="CU928178">
    <property type="protein sequence ID" value="CAR28316.1"/>
    <property type="molecule type" value="Genomic_DNA"/>
</dbReference>
<dbReference type="RefSeq" id="XP_002497249.1">
    <property type="nucleotide sequence ID" value="XM_002497204.1"/>
</dbReference>
<dbReference type="SMR" id="C5DX05"/>
<dbReference type="FunCoup" id="C5DX05">
    <property type="interactions" value="70"/>
</dbReference>
<dbReference type="GeneID" id="8205002"/>
<dbReference type="KEGG" id="zro:ZYRO0F01188g"/>
<dbReference type="HOGENOM" id="CLU_013228_0_0_1"/>
<dbReference type="InParanoid" id="C5DX05"/>
<dbReference type="Proteomes" id="UP000008536">
    <property type="component" value="Chromosome F"/>
</dbReference>
<dbReference type="GO" id="GO:0005886">
    <property type="term" value="C:plasma membrane"/>
    <property type="evidence" value="ECO:0007669"/>
    <property type="project" value="UniProtKB-SubCell"/>
</dbReference>
<dbReference type="GO" id="GO:0070941">
    <property type="term" value="P:eisosome assembly"/>
    <property type="evidence" value="ECO:0007669"/>
    <property type="project" value="TreeGrafter"/>
</dbReference>
<dbReference type="InterPro" id="IPR024527">
    <property type="entry name" value="Eisosome1"/>
</dbReference>
<dbReference type="PANTHER" id="PTHR28298">
    <property type="entry name" value="EISOSOME PROTEIN 1"/>
    <property type="match status" value="1"/>
</dbReference>
<dbReference type="PANTHER" id="PTHR28298:SF1">
    <property type="entry name" value="EISOSOME PROTEIN 1"/>
    <property type="match status" value="1"/>
</dbReference>
<dbReference type="Pfam" id="PF12757">
    <property type="entry name" value="Eisosome1"/>
    <property type="match status" value="1"/>
</dbReference>
<feature type="chain" id="PRO_0000410808" description="Eisosome protein 1">
    <location>
        <begin position="1"/>
        <end position="848"/>
    </location>
</feature>
<feature type="region of interest" description="Disordered" evidence="2">
    <location>
        <begin position="1"/>
        <end position="26"/>
    </location>
</feature>
<feature type="region of interest" description="Disordered" evidence="2">
    <location>
        <begin position="218"/>
        <end position="279"/>
    </location>
</feature>
<feature type="region of interest" description="Disordered" evidence="2">
    <location>
        <begin position="496"/>
        <end position="520"/>
    </location>
</feature>
<feature type="region of interest" description="Disordered" evidence="2">
    <location>
        <begin position="712"/>
        <end position="848"/>
    </location>
</feature>
<feature type="compositionally biased region" description="Basic and acidic residues" evidence="2">
    <location>
        <begin position="221"/>
        <end position="239"/>
    </location>
</feature>
<feature type="compositionally biased region" description="Polar residues" evidence="2">
    <location>
        <begin position="240"/>
        <end position="255"/>
    </location>
</feature>
<feature type="compositionally biased region" description="Basic and acidic residues" evidence="2">
    <location>
        <begin position="259"/>
        <end position="270"/>
    </location>
</feature>
<feature type="compositionally biased region" description="Basic and acidic residues" evidence="2">
    <location>
        <begin position="712"/>
        <end position="722"/>
    </location>
</feature>
<feature type="compositionally biased region" description="Basic and acidic residues" evidence="2">
    <location>
        <begin position="735"/>
        <end position="763"/>
    </location>
</feature>
<feature type="compositionally biased region" description="Polar residues" evidence="2">
    <location>
        <begin position="764"/>
        <end position="779"/>
    </location>
</feature>
<feature type="compositionally biased region" description="Polar residues" evidence="2">
    <location>
        <begin position="786"/>
        <end position="796"/>
    </location>
</feature>
<feature type="compositionally biased region" description="Polar residues" evidence="2">
    <location>
        <begin position="804"/>
        <end position="813"/>
    </location>
</feature>
<feature type="compositionally biased region" description="Basic and acidic residues" evidence="2">
    <location>
        <begin position="814"/>
        <end position="835"/>
    </location>
</feature>
<name>EIS1_ZYGRC</name>